<accession>A2XE99</accession>
<feature type="chain" id="PRO_0000459737" description="Anaerobic nitrite reductase NSHB3">
    <location>
        <begin position="1"/>
        <end position="169"/>
    </location>
</feature>
<feature type="domain" description="Globin" evidence="5">
    <location>
        <begin position="15"/>
        <end position="165"/>
    </location>
</feature>
<feature type="short sequence motif" description="Homodimerization" evidence="2">
    <location>
        <begin position="48"/>
        <end position="52"/>
    </location>
</feature>
<feature type="short sequence motif" description="Homodimerization" evidence="2">
    <location>
        <begin position="118"/>
        <end position="130"/>
    </location>
</feature>
<feature type="binding site" evidence="3">
    <location>
        <position position="58"/>
    </location>
    <ligand>
        <name>heme b</name>
        <dbReference type="ChEBI" id="CHEBI:60344"/>
    </ligand>
</feature>
<feature type="binding site" evidence="2">
    <location>
        <position position="72"/>
    </location>
    <ligand>
        <name>heme b</name>
        <dbReference type="ChEBI" id="CHEBI:60344"/>
    </ligand>
</feature>
<feature type="binding site" description="distal binding residue" evidence="5">
    <location>
        <position position="76"/>
    </location>
    <ligand>
        <name>heme b</name>
        <dbReference type="ChEBI" id="CHEBI:60344"/>
    </ligand>
    <ligandPart>
        <name>Fe</name>
        <dbReference type="ChEBI" id="CHEBI:18248"/>
    </ligandPart>
</feature>
<feature type="binding site" evidence="2">
    <location>
        <position position="106"/>
    </location>
    <ligand>
        <name>heme b</name>
        <dbReference type="ChEBI" id="CHEBI:60344"/>
    </ligand>
</feature>
<feature type="binding site" evidence="2">
    <location>
        <position position="110"/>
    </location>
    <ligand>
        <name>heme b</name>
        <dbReference type="ChEBI" id="CHEBI:60344"/>
    </ligand>
</feature>
<feature type="binding site" description="proximal binding residue" evidence="5">
    <location>
        <position position="111"/>
    </location>
    <ligand>
        <name>heme b</name>
        <dbReference type="ChEBI" id="CHEBI:60344"/>
    </ligand>
    <ligandPart>
        <name>Fe</name>
        <dbReference type="ChEBI" id="CHEBI:18248"/>
    </ligandPart>
</feature>
<feature type="site" description="Homodimerization" evidence="2">
    <location>
        <position position="146"/>
    </location>
</feature>
<dbReference type="EC" id="1.7.2.-" evidence="2"/>
<dbReference type="EMBL" id="CM000128">
    <property type="protein sequence ID" value="EAY89159.1"/>
    <property type="molecule type" value="Genomic_DNA"/>
</dbReference>
<dbReference type="SMR" id="A2XE99"/>
<dbReference type="STRING" id="39946.A2XE99"/>
<dbReference type="EnsemblPlants" id="BGIOSGA012187-TA">
    <property type="protein sequence ID" value="BGIOSGA012187-PA"/>
    <property type="gene ID" value="BGIOSGA012187"/>
</dbReference>
<dbReference type="EnsemblPlants" id="OsIR64_03g0009590.05">
    <property type="protein sequence ID" value="OsIR64_03g0009590.05"/>
    <property type="gene ID" value="OsIR64_03g0009590"/>
</dbReference>
<dbReference type="EnsemblPlants" id="OsKYG_03g0009780.01">
    <property type="protein sequence ID" value="OsKYG_03g0009780.01"/>
    <property type="gene ID" value="OsKYG_03g0009780"/>
</dbReference>
<dbReference type="EnsemblPlants" id="OsPr106_03g0009670.04">
    <property type="protein sequence ID" value="OsPr106_03g0009670.04"/>
    <property type="gene ID" value="OsPr106_03g0009670"/>
</dbReference>
<dbReference type="EnsemblPlants" id="OsZS97_03G009540_01">
    <property type="protein sequence ID" value="OsZS97_03G009540_01"/>
    <property type="gene ID" value="OsZS97_03G009540"/>
</dbReference>
<dbReference type="Gramene" id="BGIOSGA012187-TA">
    <property type="protein sequence ID" value="BGIOSGA012187-PA"/>
    <property type="gene ID" value="BGIOSGA012187"/>
</dbReference>
<dbReference type="Gramene" id="OsIR64_03g0009590.05">
    <property type="protein sequence ID" value="OsIR64_03g0009590.05"/>
    <property type="gene ID" value="OsIR64_03g0009590"/>
</dbReference>
<dbReference type="Gramene" id="OsKYG_03g0009780.01">
    <property type="protein sequence ID" value="OsKYG_03g0009780.01"/>
    <property type="gene ID" value="OsKYG_03g0009780"/>
</dbReference>
<dbReference type="Gramene" id="OsPr106_03g0009670.04">
    <property type="protein sequence ID" value="OsPr106_03g0009670.04"/>
    <property type="gene ID" value="OsPr106_03g0009670"/>
</dbReference>
<dbReference type="Gramene" id="OsZS97_03G009540_01">
    <property type="protein sequence ID" value="OsZS97_03G009540_01"/>
    <property type="gene ID" value="OsZS97_03G009540"/>
</dbReference>
<dbReference type="HOGENOM" id="CLU_003827_11_2_1"/>
<dbReference type="OMA" id="MRQGYQD"/>
<dbReference type="Proteomes" id="UP000007015">
    <property type="component" value="Chromosome 3"/>
</dbReference>
<dbReference type="GO" id="GO:0005737">
    <property type="term" value="C:cytoplasm"/>
    <property type="evidence" value="ECO:0000250"/>
    <property type="project" value="UniProtKB"/>
</dbReference>
<dbReference type="GO" id="GO:0005634">
    <property type="term" value="C:nucleus"/>
    <property type="evidence" value="ECO:0000250"/>
    <property type="project" value="UniProtKB"/>
</dbReference>
<dbReference type="GO" id="GO:0020037">
    <property type="term" value="F:heme binding"/>
    <property type="evidence" value="ECO:0007669"/>
    <property type="project" value="InterPro"/>
</dbReference>
<dbReference type="GO" id="GO:0046872">
    <property type="term" value="F:metal ion binding"/>
    <property type="evidence" value="ECO:0007669"/>
    <property type="project" value="UniProtKB-KW"/>
</dbReference>
<dbReference type="GO" id="GO:0016491">
    <property type="term" value="F:oxidoreductase activity"/>
    <property type="evidence" value="ECO:0007669"/>
    <property type="project" value="UniProtKB-KW"/>
</dbReference>
<dbReference type="GO" id="GO:0019825">
    <property type="term" value="F:oxygen binding"/>
    <property type="evidence" value="ECO:0007669"/>
    <property type="project" value="InterPro"/>
</dbReference>
<dbReference type="GO" id="GO:0005344">
    <property type="term" value="F:oxygen carrier activity"/>
    <property type="evidence" value="ECO:0007669"/>
    <property type="project" value="UniProtKB-KW"/>
</dbReference>
<dbReference type="GO" id="GO:0072732">
    <property type="term" value="P:cellular response to calcium ion starvation"/>
    <property type="evidence" value="ECO:0000270"/>
    <property type="project" value="UniProtKB"/>
</dbReference>
<dbReference type="GO" id="GO:0009737">
    <property type="term" value="P:response to abscisic acid"/>
    <property type="evidence" value="ECO:0000270"/>
    <property type="project" value="UniProtKB"/>
</dbReference>
<dbReference type="GO" id="GO:0009409">
    <property type="term" value="P:response to cold"/>
    <property type="evidence" value="ECO:0000270"/>
    <property type="project" value="UniProtKB"/>
</dbReference>
<dbReference type="GO" id="GO:1902074">
    <property type="term" value="P:response to salt"/>
    <property type="evidence" value="ECO:0000270"/>
    <property type="project" value="UniProtKB"/>
</dbReference>
<dbReference type="GO" id="GO:0009414">
    <property type="term" value="P:response to water deprivation"/>
    <property type="evidence" value="ECO:0000270"/>
    <property type="project" value="UniProtKB"/>
</dbReference>
<dbReference type="CDD" id="cd08923">
    <property type="entry name" value="class1-2_nsHbs_Lbs"/>
    <property type="match status" value="1"/>
</dbReference>
<dbReference type="Gene3D" id="1.10.490.10">
    <property type="entry name" value="Globins"/>
    <property type="match status" value="1"/>
</dbReference>
<dbReference type="InterPro" id="IPR000971">
    <property type="entry name" value="Globin"/>
</dbReference>
<dbReference type="InterPro" id="IPR009050">
    <property type="entry name" value="Globin-like_sf"/>
</dbReference>
<dbReference type="InterPro" id="IPR012292">
    <property type="entry name" value="Globin/Proto"/>
</dbReference>
<dbReference type="InterPro" id="IPR001032">
    <property type="entry name" value="Leghaemoglobin-like"/>
</dbReference>
<dbReference type="InterPro" id="IPR019824">
    <property type="entry name" value="Leghaemoglobin_Fe_BS"/>
</dbReference>
<dbReference type="PANTHER" id="PTHR22924">
    <property type="entry name" value="LEGHEMOGLOBIN-RELATED"/>
    <property type="match status" value="1"/>
</dbReference>
<dbReference type="PANTHER" id="PTHR22924:SF98">
    <property type="entry name" value="NON-SYMBIOTIC HEMOGLOBIN 3"/>
    <property type="match status" value="1"/>
</dbReference>
<dbReference type="Pfam" id="PF00042">
    <property type="entry name" value="Globin"/>
    <property type="match status" value="1"/>
</dbReference>
<dbReference type="PRINTS" id="PR00188">
    <property type="entry name" value="PLANTGLOBIN"/>
</dbReference>
<dbReference type="SUPFAM" id="SSF46458">
    <property type="entry name" value="Globin-like"/>
    <property type="match status" value="1"/>
</dbReference>
<dbReference type="PROSITE" id="PS01033">
    <property type="entry name" value="GLOBIN"/>
    <property type="match status" value="1"/>
</dbReference>
<dbReference type="PROSITE" id="PS00208">
    <property type="entry name" value="PLANT_GLOBIN"/>
    <property type="match status" value="1"/>
</dbReference>
<keyword id="KW-0963">Cytoplasm</keyword>
<keyword id="KW-0349">Heme</keyword>
<keyword id="KW-0408">Iron</keyword>
<keyword id="KW-0479">Metal-binding</keyword>
<keyword id="KW-0539">Nucleus</keyword>
<keyword id="KW-0560">Oxidoreductase</keyword>
<keyword id="KW-0561">Oxygen transport</keyword>
<keyword id="KW-1185">Reference proteome</keyword>
<keyword id="KW-0813">Transport</keyword>
<reference key="1">
    <citation type="journal article" date="2005" name="PLoS Biol.">
        <title>The genomes of Oryza sativa: a history of duplications.</title>
        <authorList>
            <person name="Yu J."/>
            <person name="Wang J."/>
            <person name="Lin W."/>
            <person name="Li S."/>
            <person name="Li H."/>
            <person name="Zhou J."/>
            <person name="Ni P."/>
            <person name="Dong W."/>
            <person name="Hu S."/>
            <person name="Zeng C."/>
            <person name="Zhang J."/>
            <person name="Zhang Y."/>
            <person name="Li R."/>
            <person name="Xu Z."/>
            <person name="Li S."/>
            <person name="Li X."/>
            <person name="Zheng H."/>
            <person name="Cong L."/>
            <person name="Lin L."/>
            <person name="Yin J."/>
            <person name="Geng J."/>
            <person name="Li G."/>
            <person name="Shi J."/>
            <person name="Liu J."/>
            <person name="Lv H."/>
            <person name="Li J."/>
            <person name="Wang J."/>
            <person name="Deng Y."/>
            <person name="Ran L."/>
            <person name="Shi X."/>
            <person name="Wang X."/>
            <person name="Wu Q."/>
            <person name="Li C."/>
            <person name="Ren X."/>
            <person name="Wang J."/>
            <person name="Wang X."/>
            <person name="Li D."/>
            <person name="Liu D."/>
            <person name="Zhang X."/>
            <person name="Ji Z."/>
            <person name="Zhao W."/>
            <person name="Sun Y."/>
            <person name="Zhang Z."/>
            <person name="Bao J."/>
            <person name="Han Y."/>
            <person name="Dong L."/>
            <person name="Ji J."/>
            <person name="Chen P."/>
            <person name="Wu S."/>
            <person name="Liu J."/>
            <person name="Xiao Y."/>
            <person name="Bu D."/>
            <person name="Tan J."/>
            <person name="Yang L."/>
            <person name="Ye C."/>
            <person name="Zhang J."/>
            <person name="Xu J."/>
            <person name="Zhou Y."/>
            <person name="Yu Y."/>
            <person name="Zhang B."/>
            <person name="Zhuang S."/>
            <person name="Wei H."/>
            <person name="Liu B."/>
            <person name="Lei M."/>
            <person name="Yu H."/>
            <person name="Li Y."/>
            <person name="Xu H."/>
            <person name="Wei S."/>
            <person name="He X."/>
            <person name="Fang L."/>
            <person name="Zhang Z."/>
            <person name="Zhang Y."/>
            <person name="Huang X."/>
            <person name="Su Z."/>
            <person name="Tong W."/>
            <person name="Li J."/>
            <person name="Tong Z."/>
            <person name="Li S."/>
            <person name="Ye J."/>
            <person name="Wang L."/>
            <person name="Fang L."/>
            <person name="Lei T."/>
            <person name="Chen C.-S."/>
            <person name="Chen H.-C."/>
            <person name="Xu Z."/>
            <person name="Li H."/>
            <person name="Huang H."/>
            <person name="Zhang F."/>
            <person name="Xu H."/>
            <person name="Li N."/>
            <person name="Zhao C."/>
            <person name="Li S."/>
            <person name="Dong L."/>
            <person name="Huang Y."/>
            <person name="Li L."/>
            <person name="Xi Y."/>
            <person name="Qi Q."/>
            <person name="Li W."/>
            <person name="Zhang B."/>
            <person name="Hu W."/>
            <person name="Zhang Y."/>
            <person name="Tian X."/>
            <person name="Jiao Y."/>
            <person name="Liang X."/>
            <person name="Jin J."/>
            <person name="Gao L."/>
            <person name="Zheng W."/>
            <person name="Hao B."/>
            <person name="Liu S.-M."/>
            <person name="Wang W."/>
            <person name="Yuan L."/>
            <person name="Cao M."/>
            <person name="McDermott J."/>
            <person name="Samudrala R."/>
            <person name="Wang J."/>
            <person name="Wong G.K.-S."/>
            <person name="Yang H."/>
        </authorList>
    </citation>
    <scope>NUCLEOTIDE SEQUENCE [LARGE SCALE GENOMIC DNA]</scope>
    <source>
        <strain>cv. 93-11</strain>
    </source>
</reference>
<reference key="2">
    <citation type="journal article" date="2018" name="Plant Cell Environ.">
        <title>Rice phytoglobins regulate responses under low mineral nutrients and abiotic stresses in Arabidopsis thaliana.</title>
        <authorList>
            <person name="Shankar A."/>
            <person name="Fernandes J.L."/>
            <person name="Kaur K."/>
            <person name="Sharma M."/>
            <person name="Kundu S."/>
            <person name="Pandey G.K."/>
        </authorList>
    </citation>
    <scope>GENE FAMILY</scope>
    <scope>NOMENCLATURE</scope>
    <scope>INDUCTION BY POTASSIUM; CALCIUM; SALT; DROUGHT; COLD AND ASBCISIC ACID</scope>
    <source>
        <strain>cv. IR64</strain>
    </source>
</reference>
<organism>
    <name type="scientific">Oryza sativa subsp. indica</name>
    <name type="common">Rice</name>
    <dbReference type="NCBI Taxonomy" id="39946"/>
    <lineage>
        <taxon>Eukaryota</taxon>
        <taxon>Viridiplantae</taxon>
        <taxon>Streptophyta</taxon>
        <taxon>Embryophyta</taxon>
        <taxon>Tracheophyta</taxon>
        <taxon>Spermatophyta</taxon>
        <taxon>Magnoliopsida</taxon>
        <taxon>Liliopsida</taxon>
        <taxon>Poales</taxon>
        <taxon>Poaceae</taxon>
        <taxon>BOP clade</taxon>
        <taxon>Oryzoideae</taxon>
        <taxon>Oryzeae</taxon>
        <taxon>Oryzinae</taxon>
        <taxon>Oryza</taxon>
        <taxon>Oryza sativa</taxon>
    </lineage>
</organism>
<comment type="function">
    <text evidence="2 4">Phytoglobin that reduces nitrite to nitric oxide under anoxic conditions (e.g. during flooding or in waterlogged soil) (By similarity). May not function as an oxygen storage or transport protein (By similarity). Has an unusually high affinity for O(2) through an hexacoordinate heme iron because of a very low dissociation constant (By similarity).</text>
</comment>
<comment type="catalytic activity">
    <reaction evidence="2">
        <text>Fe(III)-heme b-[protein] + nitric oxide + H2O = Fe(II)-heme b-[protein] + nitrite + 2 H(+)</text>
        <dbReference type="Rhea" id="RHEA:77711"/>
        <dbReference type="Rhea" id="RHEA-COMP:18975"/>
        <dbReference type="Rhea" id="RHEA-COMP:18976"/>
        <dbReference type="ChEBI" id="CHEBI:15377"/>
        <dbReference type="ChEBI" id="CHEBI:15378"/>
        <dbReference type="ChEBI" id="CHEBI:16301"/>
        <dbReference type="ChEBI" id="CHEBI:16480"/>
        <dbReference type="ChEBI" id="CHEBI:55376"/>
        <dbReference type="ChEBI" id="CHEBI:60344"/>
    </reaction>
    <physiologicalReaction direction="right-to-left" evidence="2">
        <dbReference type="Rhea" id="RHEA:77713"/>
    </physiologicalReaction>
</comment>
<comment type="cofactor">
    <cofactor evidence="3">
        <name>heme b</name>
        <dbReference type="ChEBI" id="CHEBI:60344"/>
    </cofactor>
    <text evidence="3">Binds 1 heme group per subunit.</text>
</comment>
<comment type="subunit">
    <text evidence="2">Homodimer.</text>
</comment>
<comment type="subcellular location">
    <subcellularLocation>
        <location evidence="1">Cytoplasm</location>
    </subcellularLocation>
    <subcellularLocation>
        <location evidence="1">Nucleus</location>
    </subcellularLocation>
</comment>
<comment type="induction">
    <text evidence="6">Accumulates upon salt (NaCL), drought, cold and asbcisic acid (ABA) treatment (PubMed:29044557). Induced in nutrient deficient conditions (e.g. Ca(2+) deprivation), but down-regulated in resupply conditions (PubMed:29044557).</text>
</comment>
<comment type="similarity">
    <text evidence="8">Belongs to the plant globin family.</text>
</comment>
<protein>
    <recommendedName>
        <fullName evidence="8">Anaerobic nitrite reductase NSHB3</fullName>
        <ecNumber evidence="2">1.7.2.-</ecNumber>
    </recommendedName>
    <alternativeName>
        <fullName evidence="8">Non-symbiotic hemoglobin 3</fullName>
        <shortName evidence="8">OsNSHB3</shortName>
        <shortName evidence="8">nsHb3-1</shortName>
        <shortName evidence="8">rHb3</shortName>
    </alternativeName>
    <alternativeName>
        <fullName evidence="8">ORYsa GLB1c</fullName>
    </alternativeName>
    <alternativeName>
        <fullName evidence="7">Phytoglobin 1.3</fullName>
        <shortName evidence="7">OsPgb1.3</shortName>
        <shortName evidence="7">Phytogb1.3</shortName>
    </alternativeName>
</protein>
<gene>
    <name evidence="8" type="primary">NSHB3</name>
    <name evidence="8" type="synonym">GLB1C</name>
    <name evidence="8" type="synonym">HB3</name>
    <name evidence="8" type="synonym">Hb3-1</name>
    <name evidence="7" type="synonym">Pgb1.3</name>
    <name evidence="9" type="ORF">OsI_10653</name>
</gene>
<sequence length="169" mass="18569">MAANGSNVVSRGAVRFTEEQEALVLKSWAIMKNDSAHIGHRFFLKIFEVAPSARQLFSFLRNSDVPLEKNPKLKIHAMAVFVMTCEAAAQLRKTGRVTVRDTTIKRLGSTHFKNGVSDAHFEVAKFALLETIKEAVPASMWSPAMKGAWGEAYDHLVAAIKQGMKPAAA</sequence>
<evidence type="ECO:0000250" key="1">
    <source>
        <dbReference type="UniProtKB" id="A2XE98"/>
    </source>
</evidence>
<evidence type="ECO:0000250" key="2">
    <source>
        <dbReference type="UniProtKB" id="O04986"/>
    </source>
</evidence>
<evidence type="ECO:0000250" key="3">
    <source>
        <dbReference type="UniProtKB" id="P68168"/>
    </source>
</evidence>
<evidence type="ECO:0000250" key="4">
    <source>
        <dbReference type="UniProtKB" id="Q42831"/>
    </source>
</evidence>
<evidence type="ECO:0000255" key="5">
    <source>
        <dbReference type="PROSITE-ProRule" id="PRU00238"/>
    </source>
</evidence>
<evidence type="ECO:0000269" key="6">
    <source>
    </source>
</evidence>
<evidence type="ECO:0000303" key="7">
    <source>
    </source>
</evidence>
<evidence type="ECO:0000305" key="8"/>
<evidence type="ECO:0000312" key="9">
    <source>
        <dbReference type="EMBL" id="EAY89159.1"/>
    </source>
</evidence>
<proteinExistence type="evidence at transcript level"/>
<name>NSHB3_ORYSI</name>